<gene>
    <name evidence="1" type="primary">hemE</name>
    <name type="ordered locus">GSU3453</name>
</gene>
<feature type="chain" id="PRO_0000325649" description="Uroporphyrinogen decarboxylase">
    <location>
        <begin position="1"/>
        <end position="340"/>
    </location>
</feature>
<feature type="binding site" evidence="1">
    <location>
        <begin position="23"/>
        <end position="27"/>
    </location>
    <ligand>
        <name>substrate</name>
    </ligand>
</feature>
<feature type="binding site" evidence="1">
    <location>
        <position position="72"/>
    </location>
    <ligand>
        <name>substrate</name>
    </ligand>
</feature>
<feature type="binding site" evidence="1">
    <location>
        <position position="147"/>
    </location>
    <ligand>
        <name>substrate</name>
    </ligand>
</feature>
<feature type="binding site" evidence="1">
    <location>
        <position position="202"/>
    </location>
    <ligand>
        <name>substrate</name>
    </ligand>
</feature>
<feature type="binding site" evidence="1">
    <location>
        <position position="316"/>
    </location>
    <ligand>
        <name>substrate</name>
    </ligand>
</feature>
<feature type="site" description="Transition state stabilizer" evidence="1">
    <location>
        <position position="72"/>
    </location>
</feature>
<keyword id="KW-0963">Cytoplasm</keyword>
<keyword id="KW-0210">Decarboxylase</keyword>
<keyword id="KW-0456">Lyase</keyword>
<keyword id="KW-0627">Porphyrin biosynthesis</keyword>
<keyword id="KW-1185">Reference proteome</keyword>
<evidence type="ECO:0000255" key="1">
    <source>
        <dbReference type="HAMAP-Rule" id="MF_00218"/>
    </source>
</evidence>
<comment type="function">
    <text evidence="1">Catalyzes the decarboxylation of four acetate groups of uroporphyrinogen-III to yield coproporphyrinogen-III.</text>
</comment>
<comment type="catalytic activity">
    <reaction evidence="1">
        <text>uroporphyrinogen III + 4 H(+) = coproporphyrinogen III + 4 CO2</text>
        <dbReference type="Rhea" id="RHEA:19865"/>
        <dbReference type="ChEBI" id="CHEBI:15378"/>
        <dbReference type="ChEBI" id="CHEBI:16526"/>
        <dbReference type="ChEBI" id="CHEBI:57308"/>
        <dbReference type="ChEBI" id="CHEBI:57309"/>
        <dbReference type="EC" id="4.1.1.37"/>
    </reaction>
</comment>
<comment type="pathway">
    <text evidence="1">Porphyrin-containing compound metabolism; protoporphyrin-IX biosynthesis; coproporphyrinogen-III from 5-aminolevulinate: step 4/4.</text>
</comment>
<comment type="subunit">
    <text evidence="1">Homodimer.</text>
</comment>
<comment type="subcellular location">
    <subcellularLocation>
        <location evidence="1">Cytoplasm</location>
    </subcellularLocation>
</comment>
<comment type="similarity">
    <text evidence="1">Belongs to the uroporphyrinogen decarboxylase family.</text>
</comment>
<accession>Q746R5</accession>
<name>DCUP_GEOSL</name>
<organism>
    <name type="scientific">Geobacter sulfurreducens (strain ATCC 51573 / DSM 12127 / PCA)</name>
    <dbReference type="NCBI Taxonomy" id="243231"/>
    <lineage>
        <taxon>Bacteria</taxon>
        <taxon>Pseudomonadati</taxon>
        <taxon>Thermodesulfobacteriota</taxon>
        <taxon>Desulfuromonadia</taxon>
        <taxon>Geobacterales</taxon>
        <taxon>Geobacteraceae</taxon>
        <taxon>Geobacter</taxon>
    </lineage>
</organism>
<reference key="1">
    <citation type="journal article" date="2003" name="Science">
        <title>Genome of Geobacter sulfurreducens: metal reduction in subsurface environments.</title>
        <authorList>
            <person name="Methe B.A."/>
            <person name="Nelson K.E."/>
            <person name="Eisen J.A."/>
            <person name="Paulsen I.T."/>
            <person name="Nelson W.C."/>
            <person name="Heidelberg J.F."/>
            <person name="Wu D."/>
            <person name="Wu M."/>
            <person name="Ward N.L."/>
            <person name="Beanan M.J."/>
            <person name="Dodson R.J."/>
            <person name="Madupu R."/>
            <person name="Brinkac L.M."/>
            <person name="Daugherty S.C."/>
            <person name="DeBoy R.T."/>
            <person name="Durkin A.S."/>
            <person name="Gwinn M.L."/>
            <person name="Kolonay J.F."/>
            <person name="Sullivan S.A."/>
            <person name="Haft D.H."/>
            <person name="Selengut J."/>
            <person name="Davidsen T.M."/>
            <person name="Zafar N."/>
            <person name="White O."/>
            <person name="Tran B."/>
            <person name="Romero C."/>
            <person name="Forberger H.A."/>
            <person name="Weidman J.F."/>
            <person name="Khouri H.M."/>
            <person name="Feldblyum T.V."/>
            <person name="Utterback T.R."/>
            <person name="Van Aken S.E."/>
            <person name="Lovley D.R."/>
            <person name="Fraser C.M."/>
        </authorList>
    </citation>
    <scope>NUCLEOTIDE SEQUENCE [LARGE SCALE GENOMIC DNA]</scope>
    <source>
        <strain>ATCC 51573 / DSM 12127 / PCA</strain>
    </source>
</reference>
<sequence length="340" mass="37815">MNNRFLDACWGKPVDRTPVWLMRQAGRYLPEYMAVRSKCTFLELCKTPELAAEVTIQPIDILNVDAAILFSDILTPVEPMGLKLDFVPGPVFEHPVRTMADVEKLRIPNPEEDVPYVLDTIKILRRELAGRVPLIGFGGAPFTLACYMVEGKGSKDWANIKRMMYAAPDVYAALMDKVTMMDMEYLNAQIKAGAQAIQIFDTWGGVLSPTDYEKYVLPYTTKLINGLNRQNTPVIHFVKGAGTMLETVQKAGGDVMGLDWHVNLGKARDVLGQNMAVQGNLDPTVLYAPKEVIEAEVKRVLDENAGRPGHIFNLGHGILPTVPPENAIHMVECVHRLSQK</sequence>
<protein>
    <recommendedName>
        <fullName evidence="1">Uroporphyrinogen decarboxylase</fullName>
        <shortName evidence="1">UPD</shortName>
        <shortName evidence="1">URO-D</shortName>
        <ecNumber evidence="1">4.1.1.37</ecNumber>
    </recommendedName>
</protein>
<dbReference type="EC" id="4.1.1.37" evidence="1"/>
<dbReference type="EMBL" id="AE017180">
    <property type="protein sequence ID" value="AAR36843.1"/>
    <property type="molecule type" value="Genomic_DNA"/>
</dbReference>
<dbReference type="RefSeq" id="NP_954493.1">
    <property type="nucleotide sequence ID" value="NC_002939.5"/>
</dbReference>
<dbReference type="RefSeq" id="WP_010944063.1">
    <property type="nucleotide sequence ID" value="NC_002939.5"/>
</dbReference>
<dbReference type="SMR" id="Q746R5"/>
<dbReference type="FunCoup" id="Q746R5">
    <property type="interactions" value="531"/>
</dbReference>
<dbReference type="STRING" id="243231.GSU3453"/>
<dbReference type="EnsemblBacteria" id="AAR36843">
    <property type="protein sequence ID" value="AAR36843"/>
    <property type="gene ID" value="GSU3453"/>
</dbReference>
<dbReference type="KEGG" id="gsu:GSU3453"/>
<dbReference type="PATRIC" id="fig|243231.5.peg.3476"/>
<dbReference type="eggNOG" id="COG0407">
    <property type="taxonomic scope" value="Bacteria"/>
</dbReference>
<dbReference type="HOGENOM" id="CLU_040933_0_0_7"/>
<dbReference type="InParanoid" id="Q746R5"/>
<dbReference type="OrthoDB" id="9806656at2"/>
<dbReference type="UniPathway" id="UPA00251">
    <property type="reaction ID" value="UER00321"/>
</dbReference>
<dbReference type="Proteomes" id="UP000000577">
    <property type="component" value="Chromosome"/>
</dbReference>
<dbReference type="GO" id="GO:0005829">
    <property type="term" value="C:cytosol"/>
    <property type="evidence" value="ECO:0000318"/>
    <property type="project" value="GO_Central"/>
</dbReference>
<dbReference type="GO" id="GO:0004853">
    <property type="term" value="F:uroporphyrinogen decarboxylase activity"/>
    <property type="evidence" value="ECO:0000318"/>
    <property type="project" value="GO_Central"/>
</dbReference>
<dbReference type="GO" id="GO:0006783">
    <property type="term" value="P:heme biosynthetic process"/>
    <property type="evidence" value="ECO:0000318"/>
    <property type="project" value="GO_Central"/>
</dbReference>
<dbReference type="GO" id="GO:0019353">
    <property type="term" value="P:protoporphyrinogen IX biosynthetic process from glutamate"/>
    <property type="evidence" value="ECO:0000318"/>
    <property type="project" value="GO_Central"/>
</dbReference>
<dbReference type="CDD" id="cd00717">
    <property type="entry name" value="URO-D"/>
    <property type="match status" value="1"/>
</dbReference>
<dbReference type="FunFam" id="3.20.20.210:FF:000015">
    <property type="entry name" value="Uroporphyrinogen decarboxylase"/>
    <property type="match status" value="1"/>
</dbReference>
<dbReference type="Gene3D" id="3.20.20.210">
    <property type="match status" value="1"/>
</dbReference>
<dbReference type="HAMAP" id="MF_00218">
    <property type="entry name" value="URO_D"/>
    <property type="match status" value="1"/>
</dbReference>
<dbReference type="InterPro" id="IPR038071">
    <property type="entry name" value="UROD/MetE-like_sf"/>
</dbReference>
<dbReference type="InterPro" id="IPR006361">
    <property type="entry name" value="Uroporphyrinogen_deCO2ase_HemE"/>
</dbReference>
<dbReference type="InterPro" id="IPR000257">
    <property type="entry name" value="Uroporphyrinogen_deCOase"/>
</dbReference>
<dbReference type="NCBIfam" id="TIGR01464">
    <property type="entry name" value="hemE"/>
    <property type="match status" value="1"/>
</dbReference>
<dbReference type="PANTHER" id="PTHR21091">
    <property type="entry name" value="METHYLTETRAHYDROFOLATE:HOMOCYSTEINE METHYLTRANSFERASE RELATED"/>
    <property type="match status" value="1"/>
</dbReference>
<dbReference type="PANTHER" id="PTHR21091:SF169">
    <property type="entry name" value="UROPORPHYRINOGEN DECARBOXYLASE"/>
    <property type="match status" value="1"/>
</dbReference>
<dbReference type="Pfam" id="PF01208">
    <property type="entry name" value="URO-D"/>
    <property type="match status" value="1"/>
</dbReference>
<dbReference type="SUPFAM" id="SSF51726">
    <property type="entry name" value="UROD/MetE-like"/>
    <property type="match status" value="1"/>
</dbReference>
<dbReference type="PROSITE" id="PS00906">
    <property type="entry name" value="UROD_1"/>
    <property type="match status" value="1"/>
</dbReference>
<dbReference type="PROSITE" id="PS00907">
    <property type="entry name" value="UROD_2"/>
    <property type="match status" value="1"/>
</dbReference>
<proteinExistence type="inferred from homology"/>